<evidence type="ECO:0000255" key="1">
    <source>
        <dbReference type="HAMAP-Rule" id="MF_01309"/>
    </source>
</evidence>
<evidence type="ECO:0000256" key="2">
    <source>
        <dbReference type="SAM" id="MobiDB-lite"/>
    </source>
</evidence>
<evidence type="ECO:0000305" key="3"/>
<proteinExistence type="inferred from homology"/>
<protein>
    <recommendedName>
        <fullName evidence="1">Small ribosomal subunit protein uS3</fullName>
    </recommendedName>
    <alternativeName>
        <fullName evidence="3">30S ribosomal protein S3</fullName>
    </alternativeName>
</protein>
<feature type="chain" id="PRO_0000293851" description="Small ribosomal subunit protein uS3">
    <location>
        <begin position="1"/>
        <end position="243"/>
    </location>
</feature>
<feature type="domain" description="KH type-2" evidence="1">
    <location>
        <begin position="39"/>
        <end position="110"/>
    </location>
</feature>
<feature type="region of interest" description="Disordered" evidence="2">
    <location>
        <begin position="216"/>
        <end position="243"/>
    </location>
</feature>
<feature type="compositionally biased region" description="Basic and acidic residues" evidence="2">
    <location>
        <begin position="233"/>
        <end position="243"/>
    </location>
</feature>
<dbReference type="EMBL" id="CP000576">
    <property type="protein sequence ID" value="ABO18366.1"/>
    <property type="molecule type" value="Genomic_DNA"/>
</dbReference>
<dbReference type="RefSeq" id="WP_011819165.1">
    <property type="nucleotide sequence ID" value="NC_009091.1"/>
</dbReference>
<dbReference type="SMR" id="A3PF41"/>
<dbReference type="STRING" id="167546.P9301_17431"/>
<dbReference type="KEGG" id="pmg:P9301_17431"/>
<dbReference type="eggNOG" id="COG0092">
    <property type="taxonomic scope" value="Bacteria"/>
</dbReference>
<dbReference type="HOGENOM" id="CLU_058591_0_2_3"/>
<dbReference type="OrthoDB" id="9806396at2"/>
<dbReference type="Proteomes" id="UP000001430">
    <property type="component" value="Chromosome"/>
</dbReference>
<dbReference type="GO" id="GO:0022627">
    <property type="term" value="C:cytosolic small ribosomal subunit"/>
    <property type="evidence" value="ECO:0007669"/>
    <property type="project" value="TreeGrafter"/>
</dbReference>
<dbReference type="GO" id="GO:0003729">
    <property type="term" value="F:mRNA binding"/>
    <property type="evidence" value="ECO:0007669"/>
    <property type="project" value="UniProtKB-UniRule"/>
</dbReference>
<dbReference type="GO" id="GO:0019843">
    <property type="term" value="F:rRNA binding"/>
    <property type="evidence" value="ECO:0007669"/>
    <property type="project" value="UniProtKB-UniRule"/>
</dbReference>
<dbReference type="GO" id="GO:0003735">
    <property type="term" value="F:structural constituent of ribosome"/>
    <property type="evidence" value="ECO:0007669"/>
    <property type="project" value="InterPro"/>
</dbReference>
<dbReference type="GO" id="GO:0006412">
    <property type="term" value="P:translation"/>
    <property type="evidence" value="ECO:0007669"/>
    <property type="project" value="UniProtKB-UniRule"/>
</dbReference>
<dbReference type="CDD" id="cd02412">
    <property type="entry name" value="KH-II_30S_S3"/>
    <property type="match status" value="1"/>
</dbReference>
<dbReference type="FunFam" id="3.30.300.20:FF:000001">
    <property type="entry name" value="30S ribosomal protein S3"/>
    <property type="match status" value="1"/>
</dbReference>
<dbReference type="Gene3D" id="3.30.300.20">
    <property type="match status" value="1"/>
</dbReference>
<dbReference type="Gene3D" id="3.30.1140.32">
    <property type="entry name" value="Ribosomal protein S3, C-terminal domain"/>
    <property type="match status" value="1"/>
</dbReference>
<dbReference type="HAMAP" id="MF_01309_B">
    <property type="entry name" value="Ribosomal_uS3_B"/>
    <property type="match status" value="1"/>
</dbReference>
<dbReference type="InterPro" id="IPR004087">
    <property type="entry name" value="KH_dom"/>
</dbReference>
<dbReference type="InterPro" id="IPR015946">
    <property type="entry name" value="KH_dom-like_a/b"/>
</dbReference>
<dbReference type="InterPro" id="IPR004044">
    <property type="entry name" value="KH_dom_type_2"/>
</dbReference>
<dbReference type="InterPro" id="IPR009019">
    <property type="entry name" value="KH_sf_prok-type"/>
</dbReference>
<dbReference type="InterPro" id="IPR036419">
    <property type="entry name" value="Ribosomal_S3_C_sf"/>
</dbReference>
<dbReference type="InterPro" id="IPR005704">
    <property type="entry name" value="Ribosomal_uS3_bac-typ"/>
</dbReference>
<dbReference type="InterPro" id="IPR001351">
    <property type="entry name" value="Ribosomal_uS3_C"/>
</dbReference>
<dbReference type="InterPro" id="IPR018280">
    <property type="entry name" value="Ribosomal_uS3_CS"/>
</dbReference>
<dbReference type="NCBIfam" id="TIGR01009">
    <property type="entry name" value="rpsC_bact"/>
    <property type="match status" value="1"/>
</dbReference>
<dbReference type="PANTHER" id="PTHR11760">
    <property type="entry name" value="30S/40S RIBOSOMAL PROTEIN S3"/>
    <property type="match status" value="1"/>
</dbReference>
<dbReference type="PANTHER" id="PTHR11760:SF19">
    <property type="entry name" value="SMALL RIBOSOMAL SUBUNIT PROTEIN US3C"/>
    <property type="match status" value="1"/>
</dbReference>
<dbReference type="Pfam" id="PF07650">
    <property type="entry name" value="KH_2"/>
    <property type="match status" value="1"/>
</dbReference>
<dbReference type="Pfam" id="PF00189">
    <property type="entry name" value="Ribosomal_S3_C"/>
    <property type="match status" value="1"/>
</dbReference>
<dbReference type="SMART" id="SM00322">
    <property type="entry name" value="KH"/>
    <property type="match status" value="1"/>
</dbReference>
<dbReference type="SUPFAM" id="SSF54814">
    <property type="entry name" value="Prokaryotic type KH domain (KH-domain type II)"/>
    <property type="match status" value="1"/>
</dbReference>
<dbReference type="SUPFAM" id="SSF54821">
    <property type="entry name" value="Ribosomal protein S3 C-terminal domain"/>
    <property type="match status" value="1"/>
</dbReference>
<dbReference type="PROSITE" id="PS50823">
    <property type="entry name" value="KH_TYPE_2"/>
    <property type="match status" value="1"/>
</dbReference>
<dbReference type="PROSITE" id="PS00548">
    <property type="entry name" value="RIBOSOMAL_S3"/>
    <property type="match status" value="1"/>
</dbReference>
<comment type="function">
    <text evidence="1">Binds the lower part of the 30S subunit head. Binds mRNA in the 70S ribosome, positioning it for translation.</text>
</comment>
<comment type="subunit">
    <text evidence="1">Part of the 30S ribosomal subunit. Forms a tight complex with proteins S10 and S14.</text>
</comment>
<comment type="similarity">
    <text evidence="1">Belongs to the universal ribosomal protein uS3 family.</text>
</comment>
<organism>
    <name type="scientific">Prochlorococcus marinus (strain MIT 9301)</name>
    <dbReference type="NCBI Taxonomy" id="167546"/>
    <lineage>
        <taxon>Bacteria</taxon>
        <taxon>Bacillati</taxon>
        <taxon>Cyanobacteriota</taxon>
        <taxon>Cyanophyceae</taxon>
        <taxon>Synechococcales</taxon>
        <taxon>Prochlorococcaceae</taxon>
        <taxon>Prochlorococcus</taxon>
    </lineage>
</organism>
<keyword id="KW-1185">Reference proteome</keyword>
<keyword id="KW-0687">Ribonucleoprotein</keyword>
<keyword id="KW-0689">Ribosomal protein</keyword>
<keyword id="KW-0694">RNA-binding</keyword>
<keyword id="KW-0699">rRNA-binding</keyword>
<name>RS3_PROM0</name>
<reference key="1">
    <citation type="journal article" date="2007" name="PLoS Genet.">
        <title>Patterns and implications of gene gain and loss in the evolution of Prochlorococcus.</title>
        <authorList>
            <person name="Kettler G.C."/>
            <person name="Martiny A.C."/>
            <person name="Huang K."/>
            <person name="Zucker J."/>
            <person name="Coleman M.L."/>
            <person name="Rodrigue S."/>
            <person name="Chen F."/>
            <person name="Lapidus A."/>
            <person name="Ferriera S."/>
            <person name="Johnson J."/>
            <person name="Steglich C."/>
            <person name="Church G.M."/>
            <person name="Richardson P."/>
            <person name="Chisholm S.W."/>
        </authorList>
    </citation>
    <scope>NUCLEOTIDE SEQUENCE [LARGE SCALE GENOMIC DNA]</scope>
    <source>
        <strain>MIT 9301</strain>
    </source>
</reference>
<gene>
    <name evidence="1" type="primary">rpsC</name>
    <name evidence="1" type="synonym">rps3</name>
    <name type="ordered locus">P9301_17431</name>
</gene>
<accession>A3PF41</accession>
<sequence>MGHKIHPSGLRLGITQEHRSKWFATSKTYPILLQEDFKIRTFIQKKYGAAGISDVLIARKADQLELELKTARPGVIVGRQGSGIEELRSGIQKTIGDRTRQVRINVVEVERVDADAFLLAEYIAQQLEKRVAFRRTIRMALQRAQRAGVLGLKIQVGGRLNGAEIARTEWTREGRVPLHTLRAEIDYATREANTTYGVLGIKVWVFKGEVLPKEEQTIPVGASPKRKASRRPQQFEDRSNENS</sequence>